<keyword id="KW-1064">Adaptive immunity</keyword>
<keyword id="KW-0202">Cytokine</keyword>
<keyword id="KW-1015">Disulfide bond</keyword>
<keyword id="KW-0325">Glycoprotein</keyword>
<keyword id="KW-0339">Growth factor</keyword>
<keyword id="KW-0391">Immunity</keyword>
<keyword id="KW-0964">Secreted</keyword>
<keyword id="KW-0732">Signal</keyword>
<protein>
    <recommendedName>
        <fullName>Interleukin-2</fullName>
        <shortName>IL-2</shortName>
    </recommendedName>
    <alternativeName>
        <fullName>T-cell growth factor</fullName>
        <shortName>TCGF</shortName>
    </alternativeName>
</protein>
<name>IL2_AOTNI</name>
<comment type="function">
    <text evidence="2">Cytokine produced by activated CD4-positive helper T-cells and to a lesser extend activated CD8-positive T-cells and natural killer (NK) cells that plays pivotal roles in the immune response and tolerance. Binds to a receptor complex composed of either the high-affinity trimeric IL-2R (IL2RA/CD25, IL2RB/CD122 and IL2RG/CD132) or the low-affinity dimeric IL-2R (IL2RB and IL2RG). Interaction with the receptor leads to oligomerization and conformation changes in the IL-2R subunits resulting in downstream signaling starting with phosphorylation of JAK1 and JAK3. In turn, JAK1 and JAK3 phosphorylate the receptor to form a docking site leading to the phosphorylation of several substrates including STAT5. This process leads to activation of several pathways including STAT, phosphoinositide-3-kinase/PI3K and mitogen-activated protein kinase/MAPK pathways. Functions as a T-cell growth factor and can increase NK-cell cytolytic activity as well. Promotes strong proliferation of activated B-cells and subsequently immunoglobulin production. Plays a pivotal role in regulating the adaptive immune system by controlling the survival and proliferation of regulatory T-cells, which are required for the maintenance of immune tolerance. Moreover, participates in the differentiation and homeostasis of effector T-cell subsets, including Th1, Th2, Th17 as well as memory CD8-positive T-cells.</text>
</comment>
<comment type="subcellular location">
    <subcellularLocation>
        <location evidence="1">Secreted</location>
    </subcellularLocation>
</comment>
<comment type="similarity">
    <text evidence="3">Belongs to the IL-2 family.</text>
</comment>
<sequence length="154" mass="17676">MYRMQLLSCIALSLALITNSAPTSSSTKKTQLQLEHLLLDLQMLLNGINNYKNPKLTRMLTFKFYMPKKATELKHLQCLEEELKPLEEVLNLAQSKNFHLRDTRDIISNINVLVLELKGSETTFTCEYDDDTATIIEFLNGWITFCQSIISTLT</sequence>
<dbReference type="EMBL" id="U88363">
    <property type="protein sequence ID" value="AAD41536.1"/>
    <property type="molecule type" value="mRNA"/>
</dbReference>
<dbReference type="SMR" id="Q7JFM3"/>
<dbReference type="GlyCosmos" id="Q7JFM3">
    <property type="glycosylation" value="1 site, No reported glycans"/>
</dbReference>
<dbReference type="GO" id="GO:0005615">
    <property type="term" value="C:extracellular space"/>
    <property type="evidence" value="ECO:0007669"/>
    <property type="project" value="UniProtKB-KW"/>
</dbReference>
<dbReference type="GO" id="GO:0005125">
    <property type="term" value="F:cytokine activity"/>
    <property type="evidence" value="ECO:0007669"/>
    <property type="project" value="UniProtKB-KW"/>
</dbReference>
<dbReference type="GO" id="GO:0008083">
    <property type="term" value="F:growth factor activity"/>
    <property type="evidence" value="ECO:0007669"/>
    <property type="project" value="UniProtKB-KW"/>
</dbReference>
<dbReference type="GO" id="GO:0005134">
    <property type="term" value="F:interleukin-2 receptor binding"/>
    <property type="evidence" value="ECO:0007669"/>
    <property type="project" value="InterPro"/>
</dbReference>
<dbReference type="GO" id="GO:0002250">
    <property type="term" value="P:adaptive immune response"/>
    <property type="evidence" value="ECO:0007669"/>
    <property type="project" value="UniProtKB-KW"/>
</dbReference>
<dbReference type="FunFam" id="1.20.1250.10:FF:000025">
    <property type="entry name" value="Interleukin-2"/>
    <property type="match status" value="1"/>
</dbReference>
<dbReference type="Gene3D" id="1.20.1250.10">
    <property type="match status" value="1"/>
</dbReference>
<dbReference type="InterPro" id="IPR009079">
    <property type="entry name" value="4_helix_cytokine-like_core"/>
</dbReference>
<dbReference type="InterPro" id="IPR000779">
    <property type="entry name" value="IL-2"/>
</dbReference>
<dbReference type="InterPro" id="IPR030477">
    <property type="entry name" value="IL-2_CS"/>
</dbReference>
<dbReference type="PANTHER" id="PTHR48487">
    <property type="entry name" value="INTERLEUKIN-2"/>
    <property type="match status" value="1"/>
</dbReference>
<dbReference type="PANTHER" id="PTHR48487:SF1">
    <property type="entry name" value="INTERLEUKIN-2"/>
    <property type="match status" value="1"/>
</dbReference>
<dbReference type="Pfam" id="PF00715">
    <property type="entry name" value="IL2"/>
    <property type="match status" value="1"/>
</dbReference>
<dbReference type="PRINTS" id="PR00265">
    <property type="entry name" value="INTERLEUKIN2"/>
</dbReference>
<dbReference type="SMART" id="SM00189">
    <property type="entry name" value="IL2"/>
    <property type="match status" value="1"/>
</dbReference>
<dbReference type="SUPFAM" id="SSF47266">
    <property type="entry name" value="4-helical cytokines"/>
    <property type="match status" value="1"/>
</dbReference>
<dbReference type="PROSITE" id="PS00424">
    <property type="entry name" value="INTERLEUKIN_2"/>
    <property type="match status" value="1"/>
</dbReference>
<feature type="signal peptide" evidence="1">
    <location>
        <begin position="1"/>
        <end position="20"/>
    </location>
</feature>
<feature type="chain" id="PRO_0000015472" description="Interleukin-2">
    <location>
        <begin position="21"/>
        <end position="154"/>
    </location>
</feature>
<feature type="glycosylation site" description="O-linked (GalNAc...) threonine" evidence="1">
    <location>
        <position position="23"/>
    </location>
</feature>
<feature type="disulfide bond" evidence="1">
    <location>
        <begin position="78"/>
        <end position="126"/>
    </location>
</feature>
<reference key="1">
    <citation type="submission" date="1997-02" db="EMBL/GenBank/DDBJ databases">
        <authorList>
            <person name="Murillo L.A."/>
            <person name="Hernandez E."/>
            <person name="Echeverry S.J."/>
            <person name="Mendez J.A."/>
            <person name="Moreno A."/>
            <person name="Patarroyo M.E."/>
        </authorList>
    </citation>
    <scope>NUCLEOTIDE SEQUENCE [MRNA]</scope>
</reference>
<organism>
    <name type="scientific">Aotus nigriceps</name>
    <name type="common">Black-headed night monkey</name>
    <dbReference type="NCBI Taxonomy" id="57175"/>
    <lineage>
        <taxon>Eukaryota</taxon>
        <taxon>Metazoa</taxon>
        <taxon>Chordata</taxon>
        <taxon>Craniata</taxon>
        <taxon>Vertebrata</taxon>
        <taxon>Euteleostomi</taxon>
        <taxon>Mammalia</taxon>
        <taxon>Eutheria</taxon>
        <taxon>Euarchontoglires</taxon>
        <taxon>Primates</taxon>
        <taxon>Haplorrhini</taxon>
        <taxon>Platyrrhini</taxon>
        <taxon>Aotidae</taxon>
        <taxon>Aotus</taxon>
    </lineage>
</organism>
<proteinExistence type="evidence at transcript level"/>
<accession>Q7JFM3</accession>
<gene>
    <name type="primary">IL2</name>
</gene>
<evidence type="ECO:0000250" key="1"/>
<evidence type="ECO:0000250" key="2">
    <source>
        <dbReference type="UniProtKB" id="P60568"/>
    </source>
</evidence>
<evidence type="ECO:0000305" key="3"/>